<sequence length="702" mass="79423">MKNIFFICFCALFAFSGCADDDDDLLTGGNVDIDLLPDAKPNDVVDPQVFEAINLNYPGLEKVKEFYEAGEHYYAANALLEYYRTRTNVTNPNLSLINVTISEAEQAKADYALVDYRFHVNNFYEDKETLKPYSVKQDGGINWEYSPKDASDEYQKQLHRHQWFIPQAKAYRVSGDEKYIQSWIEVYKNWIENNPKPTTGPNTTSWWQLQVSTRIGDQVQLLEYFKNSVNFTPEWLSTFLVEFAEQADFLVDYPYESGGNILISQANALATAGTLMPEFKNAEKWMNTGYQILSEEVQNQIMSDGWHKEMSLHYHIGIVADFYEAMKLAEANQLSSKLPSDFTEPLRKAAEVVMYFTYPNYFIKGSDNVVPMFNDSWSRTRNVLKNTNFKQYVEMFPDSEELKYMQTAGNGGTAQGRTPNNDMKLFDQAGYYVLRNGWTPASTVMILSNNKSNDASNSLSAYSHNQPDNGTFELYHNGRNFFPDSGVCTYYTSGGDNDLRYWFRGIDKHNTLSIGKQNIKKAAGKLLKSEEGATELVVFENQGYDNLKHRRAVFYVNKKFFVLVDEGIGNAEGTINLSFNLCEGTASEVVMDTDKNGVHTAFSNNNNIIVRTFANKAVTCSPFTGRIAYLVDGAYNTRQSYTIDMNKSADETARYITVILPVNGSTDTSSISAKFIDSGYSENSASVEVSVNGETHTLSYTL</sequence>
<reference key="1">
    <citation type="journal article" date="2003" name="Science">
        <title>A genomic view of the human-Bacteroides thetaiotaomicron symbiosis.</title>
        <authorList>
            <person name="Xu J."/>
            <person name="Bjursell M.K."/>
            <person name="Himrod J."/>
            <person name="Deng S."/>
            <person name="Carmichael L.K."/>
            <person name="Chiang H.C."/>
            <person name="Hooper L.V."/>
            <person name="Gordon J.I."/>
        </authorList>
    </citation>
    <scope>NUCLEOTIDE SEQUENCE [LARGE SCALE GENOMIC DNA]</scope>
    <source>
        <strain>ATCC 29148 / DSM 2079 / JCM 5827 / CCUG 10774 / NCTC 10582 / VPI-5482 / E50</strain>
    </source>
</reference>
<reference key="2">
    <citation type="journal article" date="2012" name="Protein Cell">
        <title>Structural basis of heparan sulfate-specific degradation by heparinase III.</title>
        <authorList>
            <person name="Dong W."/>
            <person name="Lu W."/>
            <person name="McKeehan W.L."/>
            <person name="Luo Y."/>
            <person name="Ye S."/>
        </authorList>
    </citation>
    <scope>X-RAY CRYSTALLOGRAPHY (1.60 ANGSTROMS)</scope>
    <scope>FUNCTION</scope>
    <scope>CATALYTIC ACTIVITY</scope>
    <scope>BIOPHYSICOCHEMICAL PROPERTIES</scope>
</reference>
<evidence type="ECO:0000250" key="1"/>
<evidence type="ECO:0000255" key="2"/>
<evidence type="ECO:0000269" key="3">
    <source>
    </source>
</evidence>
<evidence type="ECO:0000305" key="4"/>
<evidence type="ECO:0007829" key="5">
    <source>
        <dbReference type="PDB" id="4FNV"/>
    </source>
</evidence>
<protein>
    <recommendedName>
        <fullName>Heparin-sulfate lyase</fullName>
        <ecNumber>4.2.2.8</ecNumber>
    </recommendedName>
    <alternativeName>
        <fullName>Heparin-sulfate eliminase</fullName>
    </alternativeName>
    <alternativeName>
        <fullName>Heparinase III</fullName>
        <shortName>HepIII</shortName>
    </alternativeName>
    <alternativeName>
        <fullName>Heparitin-sulfate lyase</fullName>
    </alternativeName>
</protein>
<gene>
    <name type="primary">hepC</name>
    <name type="ordered locus">BT_4662</name>
</gene>
<feature type="signal peptide" evidence="2">
    <location>
        <begin position="1"/>
        <end position="17"/>
    </location>
</feature>
<feature type="chain" id="PRO_0000424105" description="Heparin-sulfate lyase">
    <location>
        <begin position="18"/>
        <end position="702"/>
    </location>
</feature>
<feature type="active site" description="Proton acceptor" evidence="2">
    <location>
        <position position="314"/>
    </location>
</feature>
<feature type="helix" evidence="5">
    <location>
        <begin position="48"/>
        <end position="52"/>
    </location>
</feature>
<feature type="helix" evidence="5">
    <location>
        <begin position="61"/>
        <end position="68"/>
    </location>
</feature>
<feature type="helix" evidence="5">
    <location>
        <begin position="72"/>
        <end position="85"/>
    </location>
</feature>
<feature type="helix" evidence="5">
    <location>
        <begin position="103"/>
        <end position="111"/>
    </location>
</feature>
<feature type="helix" evidence="5">
    <location>
        <begin position="127"/>
        <end position="129"/>
    </location>
</feature>
<feature type="helix" evidence="5">
    <location>
        <begin position="153"/>
        <end position="158"/>
    </location>
</feature>
<feature type="turn" evidence="5">
    <location>
        <begin position="159"/>
        <end position="163"/>
    </location>
</feature>
<feature type="helix" evidence="5">
    <location>
        <begin position="164"/>
        <end position="174"/>
    </location>
</feature>
<feature type="helix" evidence="5">
    <location>
        <begin position="178"/>
        <end position="193"/>
    </location>
</feature>
<feature type="strand" evidence="5">
    <location>
        <begin position="198"/>
        <end position="200"/>
    </location>
</feature>
<feature type="helix" evidence="5">
    <location>
        <begin position="208"/>
        <end position="225"/>
    </location>
</feature>
<feature type="helix" evidence="5">
    <location>
        <begin position="233"/>
        <end position="252"/>
    </location>
</feature>
<feature type="helix" evidence="5">
    <location>
        <begin position="259"/>
        <end position="275"/>
    </location>
</feature>
<feature type="helix" evidence="5">
    <location>
        <begin position="282"/>
        <end position="299"/>
    </location>
</feature>
<feature type="helix" evidence="5">
    <location>
        <begin position="312"/>
        <end position="331"/>
    </location>
</feature>
<feature type="helix" evidence="5">
    <location>
        <begin position="335"/>
        <end position="337"/>
    </location>
</feature>
<feature type="turn" evidence="5">
    <location>
        <begin position="340"/>
        <end position="345"/>
    </location>
</feature>
<feature type="helix" evidence="5">
    <location>
        <begin position="346"/>
        <end position="355"/>
    </location>
</feature>
<feature type="helix" evidence="5">
    <location>
        <begin position="359"/>
        <end position="362"/>
    </location>
</feature>
<feature type="helix" evidence="5">
    <location>
        <begin position="381"/>
        <end position="386"/>
    </location>
</feature>
<feature type="helix" evidence="5">
    <location>
        <begin position="388"/>
        <end position="395"/>
    </location>
</feature>
<feature type="helix" evidence="5">
    <location>
        <begin position="400"/>
        <end position="408"/>
    </location>
</feature>
<feature type="helix" evidence="5">
    <location>
        <begin position="409"/>
        <end position="411"/>
    </location>
</feature>
<feature type="strand" evidence="5">
    <location>
        <begin position="424"/>
        <end position="426"/>
    </location>
</feature>
<feature type="turn" evidence="5">
    <location>
        <begin position="427"/>
        <end position="430"/>
    </location>
</feature>
<feature type="strand" evidence="5">
    <location>
        <begin position="431"/>
        <end position="436"/>
    </location>
</feature>
<feature type="strand" evidence="5">
    <location>
        <begin position="443"/>
        <end position="448"/>
    </location>
</feature>
<feature type="strand" evidence="5">
    <location>
        <begin position="472"/>
        <end position="476"/>
    </location>
</feature>
<feature type="strand" evidence="5">
    <location>
        <begin position="479"/>
        <end position="482"/>
    </location>
</feature>
<feature type="helix" evidence="5">
    <location>
        <begin position="498"/>
        <end position="504"/>
    </location>
</feature>
<feature type="helix" evidence="5">
    <location>
        <begin position="506"/>
        <end position="508"/>
    </location>
</feature>
<feature type="strand" evidence="5">
    <location>
        <begin position="509"/>
        <end position="514"/>
    </location>
</feature>
<feature type="strand" evidence="5">
    <location>
        <begin position="525"/>
        <end position="530"/>
    </location>
</feature>
<feature type="strand" evidence="5">
    <location>
        <begin position="532"/>
        <end position="544"/>
    </location>
</feature>
<feature type="strand" evidence="5">
    <location>
        <begin position="547"/>
        <end position="556"/>
    </location>
</feature>
<feature type="turn" evidence="5">
    <location>
        <begin position="557"/>
        <end position="559"/>
    </location>
</feature>
<feature type="strand" evidence="5">
    <location>
        <begin position="560"/>
        <end position="570"/>
    </location>
</feature>
<feature type="strand" evidence="5">
    <location>
        <begin position="573"/>
        <end position="580"/>
    </location>
</feature>
<feature type="turn" evidence="5">
    <location>
        <begin position="586"/>
        <end position="588"/>
    </location>
</feature>
<feature type="strand" evidence="5">
    <location>
        <begin position="589"/>
        <end position="592"/>
    </location>
</feature>
<feature type="helix" evidence="5">
    <location>
        <begin position="593"/>
        <end position="595"/>
    </location>
</feature>
<feature type="strand" evidence="5">
    <location>
        <begin position="597"/>
        <end position="600"/>
    </location>
</feature>
<feature type="strand" evidence="5">
    <location>
        <begin position="606"/>
        <end position="616"/>
    </location>
</feature>
<feature type="strand" evidence="5">
    <location>
        <begin position="619"/>
        <end position="633"/>
    </location>
</feature>
<feature type="strand" evidence="5">
    <location>
        <begin position="636"/>
        <end position="647"/>
    </location>
</feature>
<feature type="strand" evidence="5">
    <location>
        <begin position="653"/>
        <end position="664"/>
    </location>
</feature>
<feature type="strand" evidence="5">
    <location>
        <begin position="671"/>
        <end position="675"/>
    </location>
</feature>
<feature type="strand" evidence="5">
    <location>
        <begin position="677"/>
        <end position="679"/>
    </location>
</feature>
<feature type="strand" evidence="5">
    <location>
        <begin position="684"/>
        <end position="691"/>
    </location>
</feature>
<feature type="strand" evidence="5">
    <location>
        <begin position="694"/>
        <end position="701"/>
    </location>
</feature>
<name>HEPC_BACTN</name>
<dbReference type="EC" id="4.2.2.8"/>
<dbReference type="EMBL" id="AE015928">
    <property type="protein sequence ID" value="AAO79767.1"/>
    <property type="molecule type" value="Genomic_DNA"/>
</dbReference>
<dbReference type="RefSeq" id="NP_813573.1">
    <property type="nucleotide sequence ID" value="NC_004663.1"/>
</dbReference>
<dbReference type="RefSeq" id="WP_008760377.1">
    <property type="nucleotide sequence ID" value="NC_004663.1"/>
</dbReference>
<dbReference type="PDB" id="4FNV">
    <property type="method" value="X-ray"/>
    <property type="resolution" value="1.60 A"/>
    <property type="chains" value="A=1-702"/>
</dbReference>
<dbReference type="PDBsum" id="4FNV"/>
<dbReference type="SMR" id="Q89YR9"/>
<dbReference type="STRING" id="226186.BT_4662"/>
<dbReference type="CAZy" id="PL12">
    <property type="family name" value="Polysaccharide Lyase Family 12"/>
</dbReference>
<dbReference type="PaxDb" id="226186-BT_4662"/>
<dbReference type="EnsemblBacteria" id="AAO79767">
    <property type="protein sequence ID" value="AAO79767"/>
    <property type="gene ID" value="BT_4662"/>
</dbReference>
<dbReference type="GeneID" id="60925835"/>
<dbReference type="KEGG" id="bth:BT_4662"/>
<dbReference type="PATRIC" id="fig|226186.12.peg.4743"/>
<dbReference type="eggNOG" id="COG5434">
    <property type="taxonomic scope" value="Bacteria"/>
</dbReference>
<dbReference type="HOGENOM" id="CLU_013047_1_0_10"/>
<dbReference type="InParanoid" id="Q89YR9"/>
<dbReference type="OrthoDB" id="7335480at2"/>
<dbReference type="BRENDA" id="4.2.2.8">
    <property type="organism ID" value="709"/>
</dbReference>
<dbReference type="SABIO-RK" id="Q89YR9"/>
<dbReference type="EvolutionaryTrace" id="Q89YR9"/>
<dbReference type="Proteomes" id="UP000001414">
    <property type="component" value="Chromosome"/>
</dbReference>
<dbReference type="GO" id="GO:0042597">
    <property type="term" value="C:periplasmic space"/>
    <property type="evidence" value="ECO:0007669"/>
    <property type="project" value="UniProtKB-SubCell"/>
</dbReference>
<dbReference type="GO" id="GO:0015021">
    <property type="term" value="F:heparin-sulfate lyase activity"/>
    <property type="evidence" value="ECO:0007669"/>
    <property type="project" value="UniProtKB-EC"/>
</dbReference>
<dbReference type="Gene3D" id="2.70.98.70">
    <property type="match status" value="1"/>
</dbReference>
<dbReference type="Gene3D" id="1.50.10.100">
    <property type="entry name" value="Chondroitin AC/alginate lyase"/>
    <property type="match status" value="1"/>
</dbReference>
<dbReference type="InterPro" id="IPR008929">
    <property type="entry name" value="Chondroitin_lyas"/>
</dbReference>
<dbReference type="InterPro" id="IPR012480">
    <property type="entry name" value="Hepar_II_III_C"/>
</dbReference>
<dbReference type="InterPro" id="IPR031680">
    <property type="entry name" value="Hepar_II_III_N"/>
</dbReference>
<dbReference type="InterPro" id="IPR054646">
    <property type="entry name" value="HepC"/>
</dbReference>
<dbReference type="NCBIfam" id="NF045572">
    <property type="entry name" value="Hepsulflyase_bctds"/>
    <property type="match status" value="1"/>
</dbReference>
<dbReference type="PANTHER" id="PTHR39210">
    <property type="entry name" value="HEPARIN-SULFATE LYASE"/>
    <property type="match status" value="1"/>
</dbReference>
<dbReference type="PANTHER" id="PTHR39210:SF1">
    <property type="entry name" value="HEPARIN-SULFATE LYASE"/>
    <property type="match status" value="1"/>
</dbReference>
<dbReference type="Pfam" id="PF07940">
    <property type="entry name" value="Hepar_II_III_C"/>
    <property type="match status" value="1"/>
</dbReference>
<dbReference type="Pfam" id="PF16889">
    <property type="entry name" value="Hepar_II_III_N"/>
    <property type="match status" value="1"/>
</dbReference>
<dbReference type="SUPFAM" id="SSF48230">
    <property type="entry name" value="Chondroitin AC/alginate lyase"/>
    <property type="match status" value="1"/>
</dbReference>
<accession>Q89YR9</accession>
<keyword id="KW-0002">3D-structure</keyword>
<keyword id="KW-0456">Lyase</keyword>
<keyword id="KW-0574">Periplasm</keyword>
<keyword id="KW-1185">Reference proteome</keyword>
<keyword id="KW-0732">Signal</keyword>
<organism>
    <name type="scientific">Bacteroides thetaiotaomicron (strain ATCC 29148 / DSM 2079 / JCM 5827 / CCUG 10774 / NCTC 10582 / VPI-5482 / E50)</name>
    <dbReference type="NCBI Taxonomy" id="226186"/>
    <lineage>
        <taxon>Bacteria</taxon>
        <taxon>Pseudomonadati</taxon>
        <taxon>Bacteroidota</taxon>
        <taxon>Bacteroidia</taxon>
        <taxon>Bacteroidales</taxon>
        <taxon>Bacteroidaceae</taxon>
        <taxon>Bacteroides</taxon>
    </lineage>
</organism>
<proteinExistence type="evidence at protein level"/>
<comment type="function">
    <text evidence="3">Specifically cleaves heparan sulfate-rich regions of acidic polysaccharides. Does not act on N,O-desulfated glucosamine or N-acetyl-O-sulfated glucosamine linkages. Functions in cleaving metazoan heparan sulfate and providing carbon, nitrogen and sulfate sources for microorganisms.</text>
</comment>
<comment type="catalytic activity">
    <reaction evidence="3">
        <text>Elimination of sulfate, appears to act on linkages between N-acetyl-D-glucosamine and uronate. Product is an unsaturated sugar.</text>
        <dbReference type="EC" id="4.2.2.8"/>
    </reaction>
</comment>
<comment type="biophysicochemical properties">
    <kinetics>
        <KM evidence="3">6.8 uM for heparan sulfate</KM>
    </kinetics>
</comment>
<comment type="subcellular location">
    <subcellularLocation>
        <location evidence="1">Periplasm</location>
    </subcellularLocation>
</comment>
<comment type="similarity">
    <text evidence="4">Belongs to the polysaccharide lyase 12 family.</text>
</comment>